<evidence type="ECO:0000255" key="1">
    <source>
        <dbReference type="HAMAP-Rule" id="MF_00200"/>
    </source>
</evidence>
<evidence type="ECO:0000305" key="2"/>
<organism>
    <name type="scientific">Staphylothermus marinus (strain ATCC 43588 / DSM 3639 / JCM 9404 / F1)</name>
    <dbReference type="NCBI Taxonomy" id="399550"/>
    <lineage>
        <taxon>Archaea</taxon>
        <taxon>Thermoproteota</taxon>
        <taxon>Thermoprotei</taxon>
        <taxon>Desulfurococcales</taxon>
        <taxon>Desulfurococcaceae</taxon>
        <taxon>Staphylothermus</taxon>
    </lineage>
</organism>
<name>RTCA_STAMF</name>
<protein>
    <recommendedName>
        <fullName evidence="1">RNA 3'-terminal phosphate cyclase</fullName>
        <shortName evidence="1">RNA cyclase</shortName>
        <shortName evidence="1">RNA-3'-phosphate cyclase</shortName>
        <ecNumber evidence="1">6.5.1.4</ecNumber>
    </recommendedName>
</protein>
<keyword id="KW-0067">ATP-binding</keyword>
<keyword id="KW-0963">Cytoplasm</keyword>
<keyword id="KW-0436">Ligase</keyword>
<keyword id="KW-0547">Nucleotide-binding</keyword>
<keyword id="KW-1185">Reference proteome</keyword>
<reference key="1">
    <citation type="journal article" date="2009" name="BMC Genomics">
        <title>The complete genome sequence of Staphylothermus marinus reveals differences in sulfur metabolism among heterotrophic Crenarchaeota.</title>
        <authorList>
            <person name="Anderson I.J."/>
            <person name="Dharmarajan L."/>
            <person name="Rodriguez J."/>
            <person name="Hooper S."/>
            <person name="Porat I."/>
            <person name="Ulrich L.E."/>
            <person name="Elkins J.G."/>
            <person name="Mavromatis K."/>
            <person name="Sun H."/>
            <person name="Land M."/>
            <person name="Lapidus A."/>
            <person name="Lucas S."/>
            <person name="Barry K."/>
            <person name="Huber H."/>
            <person name="Zhulin I.B."/>
            <person name="Whitman W.B."/>
            <person name="Mukhopadhyay B."/>
            <person name="Woese C."/>
            <person name="Bristow J."/>
            <person name="Kyrpides N."/>
        </authorList>
    </citation>
    <scope>NUCLEOTIDE SEQUENCE [LARGE SCALE GENOMIC DNA]</scope>
    <source>
        <strain>ATCC 43588 / DSM 3639 / JCM 9404 / F1</strain>
    </source>
</reference>
<reference key="2">
    <citation type="journal article" date="2009" name="Stand. Genomic Sci.">
        <title>Complete genome sequence of Staphylothermus marinus Stetter and Fiala 1986 type strain F1.</title>
        <authorList>
            <person name="Anderson I.J."/>
            <person name="Sun H."/>
            <person name="Lapidus A."/>
            <person name="Copeland A."/>
            <person name="Glavina Del Rio T."/>
            <person name="Tice H."/>
            <person name="Dalin E."/>
            <person name="Lucas S."/>
            <person name="Barry K."/>
            <person name="Land M."/>
            <person name="Richardson P."/>
            <person name="Huber H."/>
            <person name="Kyrpides N.C."/>
        </authorList>
    </citation>
    <scope>NUCLEOTIDE SEQUENCE [LARGE SCALE GENOMIC DNA]</scope>
    <source>
        <strain>ATCC 43588 / DSM 3639 / JCM 9404 / F1</strain>
    </source>
</reference>
<accession>A3DN24</accession>
<feature type="chain" id="PRO_0000325193" description="RNA 3'-terminal phosphate cyclase">
    <location>
        <begin position="1"/>
        <end position="357"/>
    </location>
</feature>
<feature type="active site" description="Tele-AMP-histidine intermediate" evidence="1">
    <location>
        <position position="319"/>
    </location>
</feature>
<feature type="binding site" evidence="1">
    <location>
        <position position="102"/>
    </location>
    <ligand>
        <name>ATP</name>
        <dbReference type="ChEBI" id="CHEBI:30616"/>
    </ligand>
</feature>
<feature type="binding site" evidence="1">
    <location>
        <begin position="293"/>
        <end position="296"/>
    </location>
    <ligand>
        <name>ATP</name>
        <dbReference type="ChEBI" id="CHEBI:30616"/>
    </ligand>
</feature>
<gene>
    <name evidence="1" type="primary">rtcA</name>
    <name type="ordered locus">Smar_0935</name>
</gene>
<sequence>MEIIEIDGSMGEGGGQILRYSLGFSAVTLKPVRIYNIRAKRSNPGLRPQHLTAVKALQMITDAVVKGAKVGSMEIYFEPKRRKPGNYRFNIGTAGSTTLVIQAILPALLFSKGYSSVEIIGGTDVPWSPPIDYMRYVFIYNLRFFGVDVEIELYRRGHYPRGGGRVVLKVKPLLGKMKPINIVERGKLISIYGISHAVRLPRHVAERQARSAATVIREKLGVEPNILIESYPPGRDPHLGPGSGIVLYADVEAGTRLGGDALGARGKRAEIVGREAAEKLIDELSSGMAFDSHMGDMLIPYMFLAGGESIAGVSKLTNHTLTAIEVSKIFLPNSKVSIVGNKGEKGIIRIHGVGLSP</sequence>
<proteinExistence type="inferred from homology"/>
<dbReference type="EC" id="6.5.1.4" evidence="1"/>
<dbReference type="EMBL" id="CP000575">
    <property type="protein sequence ID" value="ABN70034.1"/>
    <property type="status" value="ALT_INIT"/>
    <property type="molecule type" value="Genomic_DNA"/>
</dbReference>
<dbReference type="RefSeq" id="WP_052833837.1">
    <property type="nucleotide sequence ID" value="NC_009033.1"/>
</dbReference>
<dbReference type="SMR" id="A3DN24"/>
<dbReference type="STRING" id="399550.Smar_0935"/>
<dbReference type="GeneID" id="4907365"/>
<dbReference type="KEGG" id="smr:Smar_0935"/>
<dbReference type="eggNOG" id="arCOG04125">
    <property type="taxonomic scope" value="Archaea"/>
</dbReference>
<dbReference type="HOGENOM" id="CLU_027882_0_0_2"/>
<dbReference type="OrthoDB" id="7994at2157"/>
<dbReference type="Proteomes" id="UP000000254">
    <property type="component" value="Chromosome"/>
</dbReference>
<dbReference type="GO" id="GO:0005737">
    <property type="term" value="C:cytoplasm"/>
    <property type="evidence" value="ECO:0007669"/>
    <property type="project" value="UniProtKB-SubCell"/>
</dbReference>
<dbReference type="GO" id="GO:0005524">
    <property type="term" value="F:ATP binding"/>
    <property type="evidence" value="ECO:0007669"/>
    <property type="project" value="UniProtKB-KW"/>
</dbReference>
<dbReference type="GO" id="GO:0003963">
    <property type="term" value="F:RNA-3'-phosphate cyclase activity"/>
    <property type="evidence" value="ECO:0007669"/>
    <property type="project" value="UniProtKB-UniRule"/>
</dbReference>
<dbReference type="GO" id="GO:0006396">
    <property type="term" value="P:RNA processing"/>
    <property type="evidence" value="ECO:0007669"/>
    <property type="project" value="InterPro"/>
</dbReference>
<dbReference type="CDD" id="cd00874">
    <property type="entry name" value="RNA_Cyclase_Class_II"/>
    <property type="match status" value="1"/>
</dbReference>
<dbReference type="FunFam" id="3.30.360.20:FF:000002">
    <property type="entry name" value="RNA terminal phosphate cyclase-like 1"/>
    <property type="match status" value="1"/>
</dbReference>
<dbReference type="Gene3D" id="3.65.10.20">
    <property type="entry name" value="RNA 3'-terminal phosphate cyclase domain"/>
    <property type="match status" value="1"/>
</dbReference>
<dbReference type="Gene3D" id="3.30.360.20">
    <property type="entry name" value="RNA 3'-terminal phosphate cyclase, insert domain"/>
    <property type="match status" value="1"/>
</dbReference>
<dbReference type="HAMAP" id="MF_00200">
    <property type="entry name" value="RTC"/>
    <property type="match status" value="1"/>
</dbReference>
<dbReference type="InterPro" id="IPR013791">
    <property type="entry name" value="RNA3'-term_phos_cycl_insert"/>
</dbReference>
<dbReference type="InterPro" id="IPR023797">
    <property type="entry name" value="RNA3'_phos_cyclase_dom"/>
</dbReference>
<dbReference type="InterPro" id="IPR037136">
    <property type="entry name" value="RNA3'_phos_cyclase_dom_sf"/>
</dbReference>
<dbReference type="InterPro" id="IPR000228">
    <property type="entry name" value="RNA3'_term_phos_cyc"/>
</dbReference>
<dbReference type="InterPro" id="IPR017770">
    <property type="entry name" value="RNA3'_term_phos_cyc_type_1"/>
</dbReference>
<dbReference type="InterPro" id="IPR020719">
    <property type="entry name" value="RNA3'_term_phos_cycl-like_CS"/>
</dbReference>
<dbReference type="InterPro" id="IPR013792">
    <property type="entry name" value="RNA3'P_cycl/enolpyr_Trfase_a/b"/>
</dbReference>
<dbReference type="InterPro" id="IPR036553">
    <property type="entry name" value="RPTC_insert"/>
</dbReference>
<dbReference type="NCBIfam" id="TIGR03399">
    <property type="entry name" value="RNA_3prim_cycl"/>
    <property type="match status" value="1"/>
</dbReference>
<dbReference type="PANTHER" id="PTHR11096">
    <property type="entry name" value="RNA 3' TERMINAL PHOSPHATE CYCLASE"/>
    <property type="match status" value="1"/>
</dbReference>
<dbReference type="PANTHER" id="PTHR11096:SF0">
    <property type="entry name" value="RNA 3'-TERMINAL PHOSPHATE CYCLASE"/>
    <property type="match status" value="1"/>
</dbReference>
<dbReference type="Pfam" id="PF01137">
    <property type="entry name" value="RTC"/>
    <property type="match status" value="1"/>
</dbReference>
<dbReference type="Pfam" id="PF05189">
    <property type="entry name" value="RTC_insert"/>
    <property type="match status" value="1"/>
</dbReference>
<dbReference type="PIRSF" id="PIRSF005378">
    <property type="entry name" value="RNA3'_term_phos_cycl_euk"/>
    <property type="match status" value="1"/>
</dbReference>
<dbReference type="SUPFAM" id="SSF55205">
    <property type="entry name" value="EPT/RTPC-like"/>
    <property type="match status" value="1"/>
</dbReference>
<dbReference type="SUPFAM" id="SSF52913">
    <property type="entry name" value="RNA 3'-terminal phosphate cyclase, RPTC, insert domain"/>
    <property type="match status" value="1"/>
</dbReference>
<dbReference type="PROSITE" id="PS01287">
    <property type="entry name" value="RTC"/>
    <property type="match status" value="1"/>
</dbReference>
<comment type="function">
    <text evidence="1">Catalyzes the conversion of 3'-phosphate to a 2',3'-cyclic phosphodiester at the end of RNA. The mechanism of action of the enzyme occurs in 3 steps: (A) adenylation of the enzyme by ATP; (B) transfer of adenylate to an RNA-N3'P to produce RNA-N3'PP5'A; (C) and attack of the adjacent 2'-hydroxyl on the 3'-phosphorus in the diester linkage to produce the cyclic end product. The biological role of this enzyme is unknown but it is likely to function in some aspects of cellular RNA processing.</text>
</comment>
<comment type="catalytic activity">
    <reaction evidence="1">
        <text>a 3'-end 3'-phospho-ribonucleotide-RNA + ATP = a 3'-end 2',3'-cyclophospho-ribonucleotide-RNA + AMP + diphosphate</text>
        <dbReference type="Rhea" id="RHEA:23976"/>
        <dbReference type="Rhea" id="RHEA-COMP:10463"/>
        <dbReference type="Rhea" id="RHEA-COMP:10464"/>
        <dbReference type="ChEBI" id="CHEBI:30616"/>
        <dbReference type="ChEBI" id="CHEBI:33019"/>
        <dbReference type="ChEBI" id="CHEBI:83062"/>
        <dbReference type="ChEBI" id="CHEBI:83064"/>
        <dbReference type="ChEBI" id="CHEBI:456215"/>
        <dbReference type="EC" id="6.5.1.4"/>
    </reaction>
</comment>
<comment type="subcellular location">
    <subcellularLocation>
        <location evidence="1">Cytoplasm</location>
    </subcellularLocation>
</comment>
<comment type="similarity">
    <text evidence="1">Belongs to the RNA 3'-terminal cyclase family. Type 1 subfamily.</text>
</comment>
<comment type="sequence caution" evidence="2">
    <conflict type="erroneous initiation">
        <sequence resource="EMBL-CDS" id="ABN70034"/>
    </conflict>
</comment>